<reference key="1">
    <citation type="submission" date="2005-10" db="EMBL/GenBank/DDBJ databases">
        <title>Complete sequence of chromosome 1 of Burkholderia sp. 383.</title>
        <authorList>
            <consortium name="US DOE Joint Genome Institute"/>
            <person name="Copeland A."/>
            <person name="Lucas S."/>
            <person name="Lapidus A."/>
            <person name="Barry K."/>
            <person name="Detter J.C."/>
            <person name="Glavina T."/>
            <person name="Hammon N."/>
            <person name="Israni S."/>
            <person name="Pitluck S."/>
            <person name="Chain P."/>
            <person name="Malfatti S."/>
            <person name="Shin M."/>
            <person name="Vergez L."/>
            <person name="Schmutz J."/>
            <person name="Larimer F."/>
            <person name="Land M."/>
            <person name="Kyrpides N."/>
            <person name="Lykidis A."/>
            <person name="Richardson P."/>
        </authorList>
    </citation>
    <scope>NUCLEOTIDE SEQUENCE [LARGE SCALE GENOMIC DNA]</scope>
    <source>
        <strain>ATCC 17760 / DSM 23089 / LMG 22485 / NCIMB 9086 / R18194 / 383</strain>
    </source>
</reference>
<accession>Q39CN9</accession>
<proteinExistence type="inferred from homology"/>
<feature type="chain" id="PRO_1000062466" description="Protein-export protein SecB">
    <location>
        <begin position="1"/>
        <end position="160"/>
    </location>
</feature>
<keyword id="KW-0143">Chaperone</keyword>
<keyword id="KW-0963">Cytoplasm</keyword>
<keyword id="KW-0653">Protein transport</keyword>
<keyword id="KW-0811">Translocation</keyword>
<keyword id="KW-0813">Transport</keyword>
<dbReference type="EMBL" id="CP000151">
    <property type="protein sequence ID" value="ABB09777.1"/>
    <property type="molecule type" value="Genomic_DNA"/>
</dbReference>
<dbReference type="RefSeq" id="WP_011353285.1">
    <property type="nucleotide sequence ID" value="NZ_WNDV01000010.1"/>
</dbReference>
<dbReference type="SMR" id="Q39CN9"/>
<dbReference type="GeneID" id="93194060"/>
<dbReference type="KEGG" id="bur:Bcep18194_A6183"/>
<dbReference type="HOGENOM" id="CLU_111574_1_0_4"/>
<dbReference type="Proteomes" id="UP000002705">
    <property type="component" value="Chromosome 1"/>
</dbReference>
<dbReference type="GO" id="GO:0005737">
    <property type="term" value="C:cytoplasm"/>
    <property type="evidence" value="ECO:0007669"/>
    <property type="project" value="UniProtKB-SubCell"/>
</dbReference>
<dbReference type="GO" id="GO:0051082">
    <property type="term" value="F:unfolded protein binding"/>
    <property type="evidence" value="ECO:0007669"/>
    <property type="project" value="InterPro"/>
</dbReference>
<dbReference type="GO" id="GO:0006457">
    <property type="term" value="P:protein folding"/>
    <property type="evidence" value="ECO:0007669"/>
    <property type="project" value="UniProtKB-UniRule"/>
</dbReference>
<dbReference type="GO" id="GO:0051262">
    <property type="term" value="P:protein tetramerization"/>
    <property type="evidence" value="ECO:0007669"/>
    <property type="project" value="InterPro"/>
</dbReference>
<dbReference type="GO" id="GO:0015031">
    <property type="term" value="P:protein transport"/>
    <property type="evidence" value="ECO:0007669"/>
    <property type="project" value="UniProtKB-UniRule"/>
</dbReference>
<dbReference type="Gene3D" id="3.10.420.10">
    <property type="entry name" value="SecB-like"/>
    <property type="match status" value="1"/>
</dbReference>
<dbReference type="HAMAP" id="MF_00821">
    <property type="entry name" value="SecB"/>
    <property type="match status" value="1"/>
</dbReference>
<dbReference type="InterPro" id="IPR003708">
    <property type="entry name" value="SecB"/>
</dbReference>
<dbReference type="InterPro" id="IPR035958">
    <property type="entry name" value="SecB-like_sf"/>
</dbReference>
<dbReference type="NCBIfam" id="NF004392">
    <property type="entry name" value="PRK05751.1-3"/>
    <property type="match status" value="1"/>
</dbReference>
<dbReference type="NCBIfam" id="NF004394">
    <property type="entry name" value="PRK05751.1-5"/>
    <property type="match status" value="1"/>
</dbReference>
<dbReference type="NCBIfam" id="TIGR00809">
    <property type="entry name" value="secB"/>
    <property type="match status" value="1"/>
</dbReference>
<dbReference type="PANTHER" id="PTHR36918">
    <property type="match status" value="1"/>
</dbReference>
<dbReference type="PANTHER" id="PTHR36918:SF1">
    <property type="entry name" value="PROTEIN-EXPORT PROTEIN SECB"/>
    <property type="match status" value="1"/>
</dbReference>
<dbReference type="Pfam" id="PF02556">
    <property type="entry name" value="SecB"/>
    <property type="match status" value="1"/>
</dbReference>
<dbReference type="PRINTS" id="PR01594">
    <property type="entry name" value="SECBCHAPRONE"/>
</dbReference>
<dbReference type="SUPFAM" id="SSF54611">
    <property type="entry name" value="SecB-like"/>
    <property type="match status" value="1"/>
</dbReference>
<organism>
    <name type="scientific">Burkholderia lata (strain ATCC 17760 / DSM 23089 / LMG 22485 / NCIMB 9086 / R18194 / 383)</name>
    <dbReference type="NCBI Taxonomy" id="482957"/>
    <lineage>
        <taxon>Bacteria</taxon>
        <taxon>Pseudomonadati</taxon>
        <taxon>Pseudomonadota</taxon>
        <taxon>Betaproteobacteria</taxon>
        <taxon>Burkholderiales</taxon>
        <taxon>Burkholderiaceae</taxon>
        <taxon>Burkholderia</taxon>
        <taxon>Burkholderia cepacia complex</taxon>
    </lineage>
</organism>
<gene>
    <name evidence="1" type="primary">secB</name>
    <name type="ordered locus">Bcep18194_A6183</name>
</gene>
<name>SECB_BURL3</name>
<evidence type="ECO:0000255" key="1">
    <source>
        <dbReference type="HAMAP-Rule" id="MF_00821"/>
    </source>
</evidence>
<protein>
    <recommendedName>
        <fullName evidence="1">Protein-export protein SecB</fullName>
    </recommendedName>
</protein>
<comment type="function">
    <text evidence="1">One of the proteins required for the normal export of preproteins out of the cell cytoplasm. It is a molecular chaperone that binds to a subset of precursor proteins, maintaining them in a translocation-competent state. It also specifically binds to its receptor SecA.</text>
</comment>
<comment type="subunit">
    <text evidence="1">Homotetramer, a dimer of dimers. One homotetramer interacts with 1 SecA dimer.</text>
</comment>
<comment type="subcellular location">
    <subcellularLocation>
        <location evidence="1">Cytoplasm</location>
    </subcellularLocation>
</comment>
<comment type="similarity">
    <text evidence="1">Belongs to the SecB family.</text>
</comment>
<sequence>MSDVENQPFFNIQRVYLKDMSLEQPNSPAIFLEQDMPSVEVEVDVKADRLAESVFEVVVSGTVTAKVKDKVAFLIEAKQAGIFDIRNIPDEQLDPLVGIACPTILFPYLRSNIADAITRAGFPPIHLAEINFQALYEQRLAQLQQQAGAAAGAPNGTTLN</sequence>